<gene>
    <name evidence="1" type="primary">deoA</name>
    <name type="ordered locus">swp_1230</name>
</gene>
<name>TYPH_SHEPW</name>
<dbReference type="EC" id="2.4.2.4" evidence="1"/>
<dbReference type="EMBL" id="CP000472">
    <property type="protein sequence ID" value="ACJ28024.1"/>
    <property type="molecule type" value="Genomic_DNA"/>
</dbReference>
<dbReference type="RefSeq" id="WP_020911402.1">
    <property type="nucleotide sequence ID" value="NC_011566.1"/>
</dbReference>
<dbReference type="SMR" id="B8CKI5"/>
<dbReference type="STRING" id="225849.swp_1230"/>
<dbReference type="KEGG" id="swp:swp_1230"/>
<dbReference type="eggNOG" id="COG0213">
    <property type="taxonomic scope" value="Bacteria"/>
</dbReference>
<dbReference type="HOGENOM" id="CLU_025040_0_1_6"/>
<dbReference type="OrthoDB" id="9763887at2"/>
<dbReference type="UniPathway" id="UPA00578">
    <property type="reaction ID" value="UER00638"/>
</dbReference>
<dbReference type="Proteomes" id="UP000000753">
    <property type="component" value="Chromosome"/>
</dbReference>
<dbReference type="GO" id="GO:0005829">
    <property type="term" value="C:cytosol"/>
    <property type="evidence" value="ECO:0007669"/>
    <property type="project" value="TreeGrafter"/>
</dbReference>
<dbReference type="GO" id="GO:0004645">
    <property type="term" value="F:1,4-alpha-oligoglucan phosphorylase activity"/>
    <property type="evidence" value="ECO:0007669"/>
    <property type="project" value="InterPro"/>
</dbReference>
<dbReference type="GO" id="GO:0009032">
    <property type="term" value="F:thymidine phosphorylase activity"/>
    <property type="evidence" value="ECO:0007669"/>
    <property type="project" value="UniProtKB-UniRule"/>
</dbReference>
<dbReference type="GO" id="GO:0006206">
    <property type="term" value="P:pyrimidine nucleobase metabolic process"/>
    <property type="evidence" value="ECO:0007669"/>
    <property type="project" value="InterPro"/>
</dbReference>
<dbReference type="GO" id="GO:0046104">
    <property type="term" value="P:thymidine metabolic process"/>
    <property type="evidence" value="ECO:0007669"/>
    <property type="project" value="UniProtKB-UniRule"/>
</dbReference>
<dbReference type="FunFam" id="3.40.1030.10:FF:000001">
    <property type="entry name" value="Thymidine phosphorylase"/>
    <property type="match status" value="1"/>
</dbReference>
<dbReference type="FunFam" id="3.90.1170.30:FF:000001">
    <property type="entry name" value="Thymidine phosphorylase"/>
    <property type="match status" value="1"/>
</dbReference>
<dbReference type="Gene3D" id="3.40.1030.10">
    <property type="entry name" value="Nucleoside phosphorylase/phosphoribosyltransferase catalytic domain"/>
    <property type="match status" value="1"/>
</dbReference>
<dbReference type="Gene3D" id="3.90.1170.30">
    <property type="entry name" value="Pyrimidine nucleoside phosphorylase-like, C-terminal domain"/>
    <property type="match status" value="1"/>
</dbReference>
<dbReference type="Gene3D" id="1.20.970.10">
    <property type="entry name" value="Transferase, Pyrimidine Nucleoside Phosphorylase, Chain C"/>
    <property type="match status" value="1"/>
</dbReference>
<dbReference type="HAMAP" id="MF_01628">
    <property type="entry name" value="Thymid_phosp"/>
    <property type="match status" value="1"/>
</dbReference>
<dbReference type="InterPro" id="IPR000312">
    <property type="entry name" value="Glycosyl_Trfase_fam3"/>
</dbReference>
<dbReference type="InterPro" id="IPR017459">
    <property type="entry name" value="Glycosyl_Trfase_fam3_N_dom"/>
</dbReference>
<dbReference type="InterPro" id="IPR036320">
    <property type="entry name" value="Glycosyl_Trfase_fam3_N_dom_sf"/>
</dbReference>
<dbReference type="InterPro" id="IPR035902">
    <property type="entry name" value="Nuc_phospho_transferase"/>
</dbReference>
<dbReference type="InterPro" id="IPR036566">
    <property type="entry name" value="PYNP-like_C_sf"/>
</dbReference>
<dbReference type="InterPro" id="IPR013102">
    <property type="entry name" value="PYNP_C"/>
</dbReference>
<dbReference type="InterPro" id="IPR018090">
    <property type="entry name" value="Pyrmidine_PPas_bac/euk"/>
</dbReference>
<dbReference type="InterPro" id="IPR017872">
    <property type="entry name" value="Pyrmidine_PPase_CS"/>
</dbReference>
<dbReference type="InterPro" id="IPR000053">
    <property type="entry name" value="Thymidine/pyrmidine_PPase"/>
</dbReference>
<dbReference type="InterPro" id="IPR013465">
    <property type="entry name" value="Thymidine_Pase"/>
</dbReference>
<dbReference type="NCBIfam" id="NF004490">
    <property type="entry name" value="PRK05820.1"/>
    <property type="match status" value="1"/>
</dbReference>
<dbReference type="NCBIfam" id="TIGR02643">
    <property type="entry name" value="T_phosphoryl"/>
    <property type="match status" value="1"/>
</dbReference>
<dbReference type="NCBIfam" id="TIGR02644">
    <property type="entry name" value="Y_phosphoryl"/>
    <property type="match status" value="1"/>
</dbReference>
<dbReference type="PANTHER" id="PTHR10515">
    <property type="entry name" value="THYMIDINE PHOSPHORYLASE"/>
    <property type="match status" value="1"/>
</dbReference>
<dbReference type="PANTHER" id="PTHR10515:SF0">
    <property type="entry name" value="THYMIDINE PHOSPHORYLASE"/>
    <property type="match status" value="1"/>
</dbReference>
<dbReference type="Pfam" id="PF02885">
    <property type="entry name" value="Glycos_trans_3N"/>
    <property type="match status" value="1"/>
</dbReference>
<dbReference type="Pfam" id="PF00591">
    <property type="entry name" value="Glycos_transf_3"/>
    <property type="match status" value="1"/>
</dbReference>
<dbReference type="Pfam" id="PF07831">
    <property type="entry name" value="PYNP_C"/>
    <property type="match status" value="1"/>
</dbReference>
<dbReference type="PIRSF" id="PIRSF000478">
    <property type="entry name" value="TP_PyNP"/>
    <property type="match status" value="1"/>
</dbReference>
<dbReference type="SMART" id="SM00941">
    <property type="entry name" value="PYNP_C"/>
    <property type="match status" value="1"/>
</dbReference>
<dbReference type="SUPFAM" id="SSF52418">
    <property type="entry name" value="Nucleoside phosphorylase/phosphoribosyltransferase catalytic domain"/>
    <property type="match status" value="1"/>
</dbReference>
<dbReference type="SUPFAM" id="SSF47648">
    <property type="entry name" value="Nucleoside phosphorylase/phosphoribosyltransferase N-terminal domain"/>
    <property type="match status" value="1"/>
</dbReference>
<dbReference type="SUPFAM" id="SSF54680">
    <property type="entry name" value="Pyrimidine nucleoside phosphorylase C-terminal domain"/>
    <property type="match status" value="1"/>
</dbReference>
<dbReference type="PROSITE" id="PS00647">
    <property type="entry name" value="THYMID_PHOSPHORYLASE"/>
    <property type="match status" value="1"/>
</dbReference>
<sequence length="443" mass="47041">MFLAQEIIRKKRNAEVLSTEEIQFFVNGITNNTVSEGQIAALGMAVYFNDMNMDERIALTTSMRDSGTVLDWKSLDLNGPIIDKHSTGGVGDVISLMLGPMAAACGGYVPMISGRGLGHTGGTLDKFDAIPGYNTEPDSALFRKVVKEAGVAIIGQTGDLVPADKRFYSIRDNTATVESISLITASILSKKLAAGLDALAMDVKVGTGAFMPTYEASEELARSITAVANGAGTKTTALLTDMNQVLASCAGNAVEVKEAVDFMTGAYRNPRLYEVTMGLCAEMLTLGGIASNEAEARAKLNEVLDNGKAAEIFGRMVSGLGGPTDFVENYSKYLPDSQIIRPVYAEQTGFATAMDTRELGLAVVTLGGGRRKPGDTLDYSVGLTKVCALGDEVSADKPIAFIHAQSEGAFAEAEAAVKKAIHIGDTKPEKTPEIYRYIRESDL</sequence>
<comment type="function">
    <text evidence="1">The enzymes which catalyze the reversible phosphorolysis of pyrimidine nucleosides are involved in the degradation of these compounds and in their utilization as carbon and energy sources, or in the rescue of pyrimidine bases for nucleotide synthesis.</text>
</comment>
<comment type="catalytic activity">
    <reaction evidence="1">
        <text>thymidine + phosphate = 2-deoxy-alpha-D-ribose 1-phosphate + thymine</text>
        <dbReference type="Rhea" id="RHEA:16037"/>
        <dbReference type="ChEBI" id="CHEBI:17748"/>
        <dbReference type="ChEBI" id="CHEBI:17821"/>
        <dbReference type="ChEBI" id="CHEBI:43474"/>
        <dbReference type="ChEBI" id="CHEBI:57259"/>
        <dbReference type="EC" id="2.4.2.4"/>
    </reaction>
</comment>
<comment type="pathway">
    <text evidence="1">Pyrimidine metabolism; dTMP biosynthesis via salvage pathway; dTMP from thymine: step 1/2.</text>
</comment>
<comment type="subunit">
    <text evidence="1">Homodimer.</text>
</comment>
<comment type="similarity">
    <text evidence="1">Belongs to the thymidine/pyrimidine-nucleoside phosphorylase family.</text>
</comment>
<accession>B8CKI5</accession>
<feature type="chain" id="PRO_1000186274" description="Thymidine phosphorylase">
    <location>
        <begin position="1"/>
        <end position="443"/>
    </location>
</feature>
<organism>
    <name type="scientific">Shewanella piezotolerans (strain WP3 / JCM 13877)</name>
    <dbReference type="NCBI Taxonomy" id="225849"/>
    <lineage>
        <taxon>Bacteria</taxon>
        <taxon>Pseudomonadati</taxon>
        <taxon>Pseudomonadota</taxon>
        <taxon>Gammaproteobacteria</taxon>
        <taxon>Alteromonadales</taxon>
        <taxon>Shewanellaceae</taxon>
        <taxon>Shewanella</taxon>
    </lineage>
</organism>
<keyword id="KW-0328">Glycosyltransferase</keyword>
<keyword id="KW-0808">Transferase</keyword>
<reference key="1">
    <citation type="journal article" date="2008" name="PLoS ONE">
        <title>Environmental adaptation: genomic analysis of the piezotolerant and psychrotolerant deep-sea iron reducing bacterium Shewanella piezotolerans WP3.</title>
        <authorList>
            <person name="Wang F."/>
            <person name="Wang J."/>
            <person name="Jian H."/>
            <person name="Zhang B."/>
            <person name="Li S."/>
            <person name="Wang F."/>
            <person name="Zeng X."/>
            <person name="Gao L."/>
            <person name="Bartlett D.H."/>
            <person name="Yu J."/>
            <person name="Hu S."/>
            <person name="Xiao X."/>
        </authorList>
    </citation>
    <scope>NUCLEOTIDE SEQUENCE [LARGE SCALE GENOMIC DNA]</scope>
    <source>
        <strain>WP3 / JCM 13877</strain>
    </source>
</reference>
<proteinExistence type="inferred from homology"/>
<evidence type="ECO:0000255" key="1">
    <source>
        <dbReference type="HAMAP-Rule" id="MF_01628"/>
    </source>
</evidence>
<protein>
    <recommendedName>
        <fullName evidence="1">Thymidine phosphorylase</fullName>
        <ecNumber evidence="1">2.4.2.4</ecNumber>
    </recommendedName>
    <alternativeName>
        <fullName evidence="1">TdRPase</fullName>
    </alternativeName>
</protein>